<name>HIS6_PARPJ</name>
<feature type="chain" id="PRO_1000134976" description="Imidazole glycerol phosphate synthase subunit HisF">
    <location>
        <begin position="1"/>
        <end position="257"/>
    </location>
</feature>
<feature type="active site" evidence="1">
    <location>
        <position position="12"/>
    </location>
</feature>
<feature type="active site" evidence="1">
    <location>
        <position position="131"/>
    </location>
</feature>
<sequence length="257" mass="27255">MALAKRIIPCLDVTAGRVVKGVNFVELRDAGDPVEIARRYDDQGADELTFLDITATSDQRDLILPIIEAVASQVFIPLTVGGGVRAVEDVRRLLNAGADKISMNSSAVANPQLVKDATDKYGSQCIVVAIDAKRVSADGEPPRWEVFTHGGRKATGLEAVEWARKMAELGAGEILLTSMDRDGTKSGFDLALTRAVSDAVPIPVIASGGVGNLQHLADGIKNGHADAVLAASIFHYGEHTVGEAKRFMADQGISVRL</sequence>
<protein>
    <recommendedName>
        <fullName evidence="1">Imidazole glycerol phosphate synthase subunit HisF</fullName>
        <ecNumber evidence="1">4.3.2.10</ecNumber>
    </recommendedName>
    <alternativeName>
        <fullName evidence="1">IGP synthase cyclase subunit</fullName>
    </alternativeName>
    <alternativeName>
        <fullName evidence="1">IGP synthase subunit HisF</fullName>
    </alternativeName>
    <alternativeName>
        <fullName evidence="1">ImGP synthase subunit HisF</fullName>
        <shortName evidence="1">IGPS subunit HisF</shortName>
    </alternativeName>
</protein>
<proteinExistence type="inferred from homology"/>
<comment type="function">
    <text evidence="1">IGPS catalyzes the conversion of PRFAR and glutamine to IGP, AICAR and glutamate. The HisF subunit catalyzes the cyclization activity that produces IGP and AICAR from PRFAR using the ammonia provided by the HisH subunit.</text>
</comment>
<comment type="catalytic activity">
    <reaction evidence="1">
        <text>5-[(5-phospho-1-deoxy-D-ribulos-1-ylimino)methylamino]-1-(5-phospho-beta-D-ribosyl)imidazole-4-carboxamide + L-glutamine = D-erythro-1-(imidazol-4-yl)glycerol 3-phosphate + 5-amino-1-(5-phospho-beta-D-ribosyl)imidazole-4-carboxamide + L-glutamate + H(+)</text>
        <dbReference type="Rhea" id="RHEA:24793"/>
        <dbReference type="ChEBI" id="CHEBI:15378"/>
        <dbReference type="ChEBI" id="CHEBI:29985"/>
        <dbReference type="ChEBI" id="CHEBI:58278"/>
        <dbReference type="ChEBI" id="CHEBI:58359"/>
        <dbReference type="ChEBI" id="CHEBI:58475"/>
        <dbReference type="ChEBI" id="CHEBI:58525"/>
        <dbReference type="EC" id="4.3.2.10"/>
    </reaction>
</comment>
<comment type="pathway">
    <text evidence="1">Amino-acid biosynthesis; L-histidine biosynthesis; L-histidine from 5-phospho-alpha-D-ribose 1-diphosphate: step 5/9.</text>
</comment>
<comment type="subunit">
    <text evidence="1">Heterodimer of HisH and HisF.</text>
</comment>
<comment type="subcellular location">
    <subcellularLocation>
        <location evidence="1">Cytoplasm</location>
    </subcellularLocation>
</comment>
<comment type="similarity">
    <text evidence="1">Belongs to the HisA/HisF family.</text>
</comment>
<gene>
    <name evidence="1" type="primary">hisF</name>
    <name type="ordered locus">Bphyt_3554</name>
</gene>
<organism>
    <name type="scientific">Paraburkholderia phytofirmans (strain DSM 17436 / LMG 22146 / PsJN)</name>
    <name type="common">Burkholderia phytofirmans</name>
    <dbReference type="NCBI Taxonomy" id="398527"/>
    <lineage>
        <taxon>Bacteria</taxon>
        <taxon>Pseudomonadati</taxon>
        <taxon>Pseudomonadota</taxon>
        <taxon>Betaproteobacteria</taxon>
        <taxon>Burkholderiales</taxon>
        <taxon>Burkholderiaceae</taxon>
        <taxon>Paraburkholderia</taxon>
    </lineage>
</organism>
<keyword id="KW-0028">Amino-acid biosynthesis</keyword>
<keyword id="KW-0963">Cytoplasm</keyword>
<keyword id="KW-0368">Histidine biosynthesis</keyword>
<keyword id="KW-0456">Lyase</keyword>
<evidence type="ECO:0000255" key="1">
    <source>
        <dbReference type="HAMAP-Rule" id="MF_01013"/>
    </source>
</evidence>
<accession>B2SZ59</accession>
<dbReference type="EC" id="4.3.2.10" evidence="1"/>
<dbReference type="EMBL" id="CP001052">
    <property type="protein sequence ID" value="ACD17944.1"/>
    <property type="molecule type" value="Genomic_DNA"/>
</dbReference>
<dbReference type="RefSeq" id="WP_012434503.1">
    <property type="nucleotide sequence ID" value="NC_010681.1"/>
</dbReference>
<dbReference type="SMR" id="B2SZ59"/>
<dbReference type="STRING" id="398527.Bphyt_3554"/>
<dbReference type="KEGG" id="bpy:Bphyt_3554"/>
<dbReference type="eggNOG" id="COG0107">
    <property type="taxonomic scope" value="Bacteria"/>
</dbReference>
<dbReference type="HOGENOM" id="CLU_048577_4_0_4"/>
<dbReference type="OrthoDB" id="9781903at2"/>
<dbReference type="UniPathway" id="UPA00031">
    <property type="reaction ID" value="UER00010"/>
</dbReference>
<dbReference type="Proteomes" id="UP000001739">
    <property type="component" value="Chromosome 1"/>
</dbReference>
<dbReference type="GO" id="GO:0005737">
    <property type="term" value="C:cytoplasm"/>
    <property type="evidence" value="ECO:0007669"/>
    <property type="project" value="UniProtKB-SubCell"/>
</dbReference>
<dbReference type="GO" id="GO:0000107">
    <property type="term" value="F:imidazoleglycerol-phosphate synthase activity"/>
    <property type="evidence" value="ECO:0007669"/>
    <property type="project" value="UniProtKB-UniRule"/>
</dbReference>
<dbReference type="GO" id="GO:0016829">
    <property type="term" value="F:lyase activity"/>
    <property type="evidence" value="ECO:0007669"/>
    <property type="project" value="UniProtKB-KW"/>
</dbReference>
<dbReference type="GO" id="GO:0000105">
    <property type="term" value="P:L-histidine biosynthetic process"/>
    <property type="evidence" value="ECO:0007669"/>
    <property type="project" value="UniProtKB-UniRule"/>
</dbReference>
<dbReference type="CDD" id="cd04731">
    <property type="entry name" value="HisF"/>
    <property type="match status" value="1"/>
</dbReference>
<dbReference type="FunFam" id="3.20.20.70:FF:000006">
    <property type="entry name" value="Imidazole glycerol phosphate synthase subunit HisF"/>
    <property type="match status" value="1"/>
</dbReference>
<dbReference type="Gene3D" id="3.20.20.70">
    <property type="entry name" value="Aldolase class I"/>
    <property type="match status" value="1"/>
</dbReference>
<dbReference type="HAMAP" id="MF_01013">
    <property type="entry name" value="HisF"/>
    <property type="match status" value="1"/>
</dbReference>
<dbReference type="InterPro" id="IPR013785">
    <property type="entry name" value="Aldolase_TIM"/>
</dbReference>
<dbReference type="InterPro" id="IPR006062">
    <property type="entry name" value="His_biosynth"/>
</dbReference>
<dbReference type="InterPro" id="IPR004651">
    <property type="entry name" value="HisF"/>
</dbReference>
<dbReference type="InterPro" id="IPR050064">
    <property type="entry name" value="IGPS_HisA/HisF"/>
</dbReference>
<dbReference type="InterPro" id="IPR011060">
    <property type="entry name" value="RibuloseP-bd_barrel"/>
</dbReference>
<dbReference type="NCBIfam" id="TIGR00735">
    <property type="entry name" value="hisF"/>
    <property type="match status" value="1"/>
</dbReference>
<dbReference type="PANTHER" id="PTHR21235:SF2">
    <property type="entry name" value="IMIDAZOLE GLYCEROL PHOSPHATE SYNTHASE HISHF"/>
    <property type="match status" value="1"/>
</dbReference>
<dbReference type="PANTHER" id="PTHR21235">
    <property type="entry name" value="IMIDAZOLE GLYCEROL PHOSPHATE SYNTHASE SUBUNIT HISF/H IGP SYNTHASE SUBUNIT HISF/H"/>
    <property type="match status" value="1"/>
</dbReference>
<dbReference type="Pfam" id="PF00977">
    <property type="entry name" value="His_biosynth"/>
    <property type="match status" value="1"/>
</dbReference>
<dbReference type="SUPFAM" id="SSF51366">
    <property type="entry name" value="Ribulose-phoshate binding barrel"/>
    <property type="match status" value="1"/>
</dbReference>
<reference key="1">
    <citation type="journal article" date="2011" name="J. Bacteriol.">
        <title>Complete genome sequence of the plant growth-promoting endophyte Burkholderia phytofirmans strain PsJN.</title>
        <authorList>
            <person name="Weilharter A."/>
            <person name="Mitter B."/>
            <person name="Shin M.V."/>
            <person name="Chain P.S."/>
            <person name="Nowak J."/>
            <person name="Sessitsch A."/>
        </authorList>
    </citation>
    <scope>NUCLEOTIDE SEQUENCE [LARGE SCALE GENOMIC DNA]</scope>
    <source>
        <strain>DSM 17436 / LMG 22146 / PsJN</strain>
    </source>
</reference>